<name>ACYP_ENTFA</name>
<gene>
    <name type="primary">acyP</name>
    <name type="ordered locus">EF_2401</name>
</gene>
<sequence>MEKLRMNVQGRVQGVGFRYMTKMVADQLGVTGSVRNEDDGSVSITAIAPEDIMETFIKKIKDSPSPAGRVTYVDIQEDPLLEETEQFKVIQ</sequence>
<feature type="chain" id="PRO_0000326706" description="Acylphosphatase">
    <location>
        <begin position="1"/>
        <end position="91"/>
    </location>
</feature>
<feature type="domain" description="Acylphosphatase-like" evidence="1">
    <location>
        <begin position="3"/>
        <end position="91"/>
    </location>
</feature>
<feature type="active site" evidence="1">
    <location>
        <position position="18"/>
    </location>
</feature>
<feature type="active site" evidence="1">
    <location>
        <position position="36"/>
    </location>
</feature>
<comment type="catalytic activity">
    <reaction>
        <text>an acyl phosphate + H2O = a carboxylate + phosphate + H(+)</text>
        <dbReference type="Rhea" id="RHEA:14965"/>
        <dbReference type="ChEBI" id="CHEBI:15377"/>
        <dbReference type="ChEBI" id="CHEBI:15378"/>
        <dbReference type="ChEBI" id="CHEBI:29067"/>
        <dbReference type="ChEBI" id="CHEBI:43474"/>
        <dbReference type="ChEBI" id="CHEBI:59918"/>
        <dbReference type="EC" id="3.6.1.7"/>
    </reaction>
</comment>
<comment type="similarity">
    <text evidence="2">Belongs to the acylphosphatase family.</text>
</comment>
<protein>
    <recommendedName>
        <fullName>Acylphosphatase</fullName>
        <ecNumber>3.6.1.7</ecNumber>
    </recommendedName>
    <alternativeName>
        <fullName>Acylphosphate phosphohydrolase</fullName>
    </alternativeName>
</protein>
<organism>
    <name type="scientific">Enterococcus faecalis (strain ATCC 700802 / V583)</name>
    <dbReference type="NCBI Taxonomy" id="226185"/>
    <lineage>
        <taxon>Bacteria</taxon>
        <taxon>Bacillati</taxon>
        <taxon>Bacillota</taxon>
        <taxon>Bacilli</taxon>
        <taxon>Lactobacillales</taxon>
        <taxon>Enterococcaceae</taxon>
        <taxon>Enterococcus</taxon>
    </lineage>
</organism>
<reference key="1">
    <citation type="journal article" date="2003" name="Science">
        <title>Role of mobile DNA in the evolution of vancomycin-resistant Enterococcus faecalis.</title>
        <authorList>
            <person name="Paulsen I.T."/>
            <person name="Banerjei L."/>
            <person name="Myers G.S.A."/>
            <person name="Nelson K.E."/>
            <person name="Seshadri R."/>
            <person name="Read T.D."/>
            <person name="Fouts D.E."/>
            <person name="Eisen J.A."/>
            <person name="Gill S.R."/>
            <person name="Heidelberg J.F."/>
            <person name="Tettelin H."/>
            <person name="Dodson R.J."/>
            <person name="Umayam L.A."/>
            <person name="Brinkac L.M."/>
            <person name="Beanan M.J."/>
            <person name="Daugherty S.C."/>
            <person name="DeBoy R.T."/>
            <person name="Durkin S.A."/>
            <person name="Kolonay J.F."/>
            <person name="Madupu R."/>
            <person name="Nelson W.C."/>
            <person name="Vamathevan J.J."/>
            <person name="Tran B."/>
            <person name="Upton J."/>
            <person name="Hansen T."/>
            <person name="Shetty J."/>
            <person name="Khouri H.M."/>
            <person name="Utterback T.R."/>
            <person name="Radune D."/>
            <person name="Ketchum K.A."/>
            <person name="Dougherty B.A."/>
            <person name="Fraser C.M."/>
        </authorList>
    </citation>
    <scope>NUCLEOTIDE SEQUENCE [LARGE SCALE GENOMIC DNA]</scope>
    <source>
        <strain>ATCC 700802 / V583</strain>
    </source>
</reference>
<accession>Q831U6</accession>
<proteinExistence type="inferred from homology"/>
<keyword id="KW-0378">Hydrolase</keyword>
<keyword id="KW-1185">Reference proteome</keyword>
<dbReference type="EC" id="3.6.1.7"/>
<dbReference type="EMBL" id="AE016830">
    <property type="protein sequence ID" value="AAO82122.1"/>
    <property type="molecule type" value="Genomic_DNA"/>
</dbReference>
<dbReference type="RefSeq" id="NP_816052.1">
    <property type="nucleotide sequence ID" value="NC_004668.1"/>
</dbReference>
<dbReference type="RefSeq" id="WP_010706543.1">
    <property type="nucleotide sequence ID" value="NZ_KE136528.1"/>
</dbReference>
<dbReference type="SMR" id="Q831U6"/>
<dbReference type="STRING" id="226185.EF_2401"/>
<dbReference type="EnsemblBacteria" id="AAO82122">
    <property type="protein sequence ID" value="AAO82122"/>
    <property type="gene ID" value="EF_2401"/>
</dbReference>
<dbReference type="KEGG" id="efa:EF2401"/>
<dbReference type="PATRIC" id="fig|226185.45.peg.1140"/>
<dbReference type="eggNOG" id="COG1254">
    <property type="taxonomic scope" value="Bacteria"/>
</dbReference>
<dbReference type="HOGENOM" id="CLU_141932_2_1_9"/>
<dbReference type="Proteomes" id="UP000001415">
    <property type="component" value="Chromosome"/>
</dbReference>
<dbReference type="GO" id="GO:0003998">
    <property type="term" value="F:acylphosphatase activity"/>
    <property type="evidence" value="ECO:0007669"/>
    <property type="project" value="UniProtKB-EC"/>
</dbReference>
<dbReference type="Gene3D" id="3.30.70.100">
    <property type="match status" value="1"/>
</dbReference>
<dbReference type="InterPro" id="IPR020456">
    <property type="entry name" value="Acylphosphatase"/>
</dbReference>
<dbReference type="InterPro" id="IPR001792">
    <property type="entry name" value="Acylphosphatase-like_dom"/>
</dbReference>
<dbReference type="InterPro" id="IPR036046">
    <property type="entry name" value="Acylphosphatase-like_dom_sf"/>
</dbReference>
<dbReference type="InterPro" id="IPR017968">
    <property type="entry name" value="Acylphosphatase_CS"/>
</dbReference>
<dbReference type="PANTHER" id="PTHR47268">
    <property type="entry name" value="ACYLPHOSPHATASE"/>
    <property type="match status" value="1"/>
</dbReference>
<dbReference type="PANTHER" id="PTHR47268:SF4">
    <property type="entry name" value="ACYLPHOSPHATASE"/>
    <property type="match status" value="1"/>
</dbReference>
<dbReference type="Pfam" id="PF00708">
    <property type="entry name" value="Acylphosphatase"/>
    <property type="match status" value="1"/>
</dbReference>
<dbReference type="SUPFAM" id="SSF54975">
    <property type="entry name" value="Acylphosphatase/BLUF domain-like"/>
    <property type="match status" value="1"/>
</dbReference>
<dbReference type="PROSITE" id="PS00150">
    <property type="entry name" value="ACYLPHOSPHATASE_1"/>
    <property type="match status" value="1"/>
</dbReference>
<dbReference type="PROSITE" id="PS51160">
    <property type="entry name" value="ACYLPHOSPHATASE_3"/>
    <property type="match status" value="1"/>
</dbReference>
<evidence type="ECO:0000255" key="1">
    <source>
        <dbReference type="PROSITE-ProRule" id="PRU00520"/>
    </source>
</evidence>
<evidence type="ECO:0000305" key="2"/>